<proteinExistence type="inferred from homology"/>
<feature type="chain" id="PRO_0000229531" description="Small ribosomal subunit protein bS6">
    <location>
        <begin position="1"/>
        <end position="112"/>
    </location>
</feature>
<reference key="1">
    <citation type="journal article" date="2005" name="Infect. Immun.">
        <title>Comparative genomic analysis of Chlamydia trachomatis oculotropic and genitotropic strains.</title>
        <authorList>
            <person name="Carlson J.H."/>
            <person name="Porcella S.F."/>
            <person name="McClarty G."/>
            <person name="Caldwell H.D."/>
        </authorList>
    </citation>
    <scope>NUCLEOTIDE SEQUENCE [LARGE SCALE GENOMIC DNA]</scope>
    <source>
        <strain>ATCC VR-571B / DSM 19440 / HAR-13</strain>
    </source>
</reference>
<accession>Q3KKP0</accession>
<keyword id="KW-0687">Ribonucleoprotein</keyword>
<keyword id="KW-0689">Ribosomal protein</keyword>
<keyword id="KW-0694">RNA-binding</keyword>
<keyword id="KW-0699">rRNA-binding</keyword>
<dbReference type="EMBL" id="CP000051">
    <property type="protein sequence ID" value="AAX51082.1"/>
    <property type="molecule type" value="Genomic_DNA"/>
</dbReference>
<dbReference type="RefSeq" id="WP_009872183.1">
    <property type="nucleotide sequence ID" value="NC_007429.1"/>
</dbReference>
<dbReference type="SMR" id="Q3KKP0"/>
<dbReference type="KEGG" id="cta:CTA_0873"/>
<dbReference type="HOGENOM" id="CLU_113441_5_2_0"/>
<dbReference type="Proteomes" id="UP000002532">
    <property type="component" value="Chromosome"/>
</dbReference>
<dbReference type="GO" id="GO:0005737">
    <property type="term" value="C:cytoplasm"/>
    <property type="evidence" value="ECO:0007669"/>
    <property type="project" value="UniProtKB-ARBA"/>
</dbReference>
<dbReference type="GO" id="GO:1990904">
    <property type="term" value="C:ribonucleoprotein complex"/>
    <property type="evidence" value="ECO:0007669"/>
    <property type="project" value="UniProtKB-KW"/>
</dbReference>
<dbReference type="GO" id="GO:0005840">
    <property type="term" value="C:ribosome"/>
    <property type="evidence" value="ECO:0007669"/>
    <property type="project" value="UniProtKB-KW"/>
</dbReference>
<dbReference type="GO" id="GO:0070181">
    <property type="term" value="F:small ribosomal subunit rRNA binding"/>
    <property type="evidence" value="ECO:0007669"/>
    <property type="project" value="TreeGrafter"/>
</dbReference>
<dbReference type="GO" id="GO:0003735">
    <property type="term" value="F:structural constituent of ribosome"/>
    <property type="evidence" value="ECO:0007669"/>
    <property type="project" value="InterPro"/>
</dbReference>
<dbReference type="GO" id="GO:0006412">
    <property type="term" value="P:translation"/>
    <property type="evidence" value="ECO:0007669"/>
    <property type="project" value="UniProtKB-UniRule"/>
</dbReference>
<dbReference type="CDD" id="cd00473">
    <property type="entry name" value="bS6"/>
    <property type="match status" value="1"/>
</dbReference>
<dbReference type="Gene3D" id="3.30.70.60">
    <property type="match status" value="1"/>
</dbReference>
<dbReference type="HAMAP" id="MF_00360">
    <property type="entry name" value="Ribosomal_bS6"/>
    <property type="match status" value="1"/>
</dbReference>
<dbReference type="InterPro" id="IPR000529">
    <property type="entry name" value="Ribosomal_bS6"/>
</dbReference>
<dbReference type="InterPro" id="IPR035980">
    <property type="entry name" value="Ribosomal_bS6_sf"/>
</dbReference>
<dbReference type="InterPro" id="IPR020814">
    <property type="entry name" value="Ribosomal_S6_plastid/chlpt"/>
</dbReference>
<dbReference type="InterPro" id="IPR014717">
    <property type="entry name" value="Transl_elong_EF1B/ribsomal_bS6"/>
</dbReference>
<dbReference type="NCBIfam" id="TIGR00166">
    <property type="entry name" value="S6"/>
    <property type="match status" value="1"/>
</dbReference>
<dbReference type="PANTHER" id="PTHR21011">
    <property type="entry name" value="MITOCHONDRIAL 28S RIBOSOMAL PROTEIN S6"/>
    <property type="match status" value="1"/>
</dbReference>
<dbReference type="PANTHER" id="PTHR21011:SF1">
    <property type="entry name" value="SMALL RIBOSOMAL SUBUNIT PROTEIN BS6M"/>
    <property type="match status" value="1"/>
</dbReference>
<dbReference type="Pfam" id="PF01250">
    <property type="entry name" value="Ribosomal_S6"/>
    <property type="match status" value="1"/>
</dbReference>
<dbReference type="SUPFAM" id="SSF54995">
    <property type="entry name" value="Ribosomal protein S6"/>
    <property type="match status" value="1"/>
</dbReference>
<organism>
    <name type="scientific">Chlamydia trachomatis serovar A (strain ATCC VR-571B / DSM 19440 / HAR-13)</name>
    <dbReference type="NCBI Taxonomy" id="315277"/>
    <lineage>
        <taxon>Bacteria</taxon>
        <taxon>Pseudomonadati</taxon>
        <taxon>Chlamydiota</taxon>
        <taxon>Chlamydiia</taxon>
        <taxon>Chlamydiales</taxon>
        <taxon>Chlamydiaceae</taxon>
        <taxon>Chlamydia/Chlamydophila group</taxon>
        <taxon>Chlamydia</taxon>
    </lineage>
</organism>
<evidence type="ECO:0000255" key="1">
    <source>
        <dbReference type="HAMAP-Rule" id="MF_00360"/>
    </source>
</evidence>
<evidence type="ECO:0000305" key="2"/>
<name>RS6_CHLTA</name>
<sequence length="112" mass="12907">MKKKTGQLYEGAYVFSVTLSEDARRKALEKVTSGITNYGGEVLKIHDQGRKKLAYTIRGAREGYYYFIYFTVAPEAIAELWREYHLNEDLLRFMTLKASAVKEVLEFATLPE</sequence>
<gene>
    <name evidence="1" type="primary">rpsF</name>
    <name type="ordered locus">CTA_0873</name>
</gene>
<protein>
    <recommendedName>
        <fullName evidence="1">Small ribosomal subunit protein bS6</fullName>
    </recommendedName>
    <alternativeName>
        <fullName evidence="2">30S ribosomal protein S6</fullName>
    </alternativeName>
</protein>
<comment type="function">
    <text evidence="1">Binds together with bS18 to 16S ribosomal RNA.</text>
</comment>
<comment type="similarity">
    <text evidence="1">Belongs to the bacterial ribosomal protein bS6 family.</text>
</comment>